<evidence type="ECO:0000255" key="1">
    <source>
        <dbReference type="HAMAP-Rule" id="MF_01367"/>
    </source>
</evidence>
<evidence type="ECO:0000305" key="2"/>
<accession>Q2RFQ7</accession>
<reference key="1">
    <citation type="journal article" date="2008" name="Environ. Microbiol.">
        <title>The complete genome sequence of Moorella thermoacetica (f. Clostridium thermoaceticum).</title>
        <authorList>
            <person name="Pierce E."/>
            <person name="Xie G."/>
            <person name="Barabote R.D."/>
            <person name="Saunders E."/>
            <person name="Han C.S."/>
            <person name="Detter J.C."/>
            <person name="Richardson P."/>
            <person name="Brettin T.S."/>
            <person name="Das A."/>
            <person name="Ljungdahl L.G."/>
            <person name="Ragsdale S.W."/>
        </authorList>
    </citation>
    <scope>NUCLEOTIDE SEQUENCE [LARGE SCALE GENOMIC DNA]</scope>
    <source>
        <strain>ATCC 39073 / JCM 9320</strain>
    </source>
</reference>
<dbReference type="EMBL" id="CP000232">
    <property type="protein sequence ID" value="ABC20732.1"/>
    <property type="molecule type" value="Genomic_DNA"/>
</dbReference>
<dbReference type="RefSeq" id="YP_431275.1">
    <property type="nucleotide sequence ID" value="NC_007644.1"/>
</dbReference>
<dbReference type="SMR" id="Q2RFQ7"/>
<dbReference type="STRING" id="264732.Moth_2450"/>
<dbReference type="EnsemblBacteria" id="ABC20732">
    <property type="protein sequence ID" value="ABC20732"/>
    <property type="gene ID" value="Moth_2450"/>
</dbReference>
<dbReference type="KEGG" id="mta:Moth_2450"/>
<dbReference type="PATRIC" id="fig|264732.11.peg.2668"/>
<dbReference type="eggNOG" id="COG0093">
    <property type="taxonomic scope" value="Bacteria"/>
</dbReference>
<dbReference type="HOGENOM" id="CLU_095071_2_1_9"/>
<dbReference type="OrthoDB" id="9806379at2"/>
<dbReference type="GO" id="GO:0022625">
    <property type="term" value="C:cytosolic large ribosomal subunit"/>
    <property type="evidence" value="ECO:0007669"/>
    <property type="project" value="TreeGrafter"/>
</dbReference>
<dbReference type="GO" id="GO:0070180">
    <property type="term" value="F:large ribosomal subunit rRNA binding"/>
    <property type="evidence" value="ECO:0007669"/>
    <property type="project" value="TreeGrafter"/>
</dbReference>
<dbReference type="GO" id="GO:0003735">
    <property type="term" value="F:structural constituent of ribosome"/>
    <property type="evidence" value="ECO:0007669"/>
    <property type="project" value="InterPro"/>
</dbReference>
<dbReference type="GO" id="GO:0006412">
    <property type="term" value="P:translation"/>
    <property type="evidence" value="ECO:0007669"/>
    <property type="project" value="UniProtKB-UniRule"/>
</dbReference>
<dbReference type="CDD" id="cd00337">
    <property type="entry name" value="Ribosomal_uL14"/>
    <property type="match status" value="1"/>
</dbReference>
<dbReference type="FunFam" id="2.40.150.20:FF:000001">
    <property type="entry name" value="50S ribosomal protein L14"/>
    <property type="match status" value="1"/>
</dbReference>
<dbReference type="Gene3D" id="2.40.150.20">
    <property type="entry name" value="Ribosomal protein L14"/>
    <property type="match status" value="1"/>
</dbReference>
<dbReference type="HAMAP" id="MF_01367">
    <property type="entry name" value="Ribosomal_uL14"/>
    <property type="match status" value="1"/>
</dbReference>
<dbReference type="InterPro" id="IPR000218">
    <property type="entry name" value="Ribosomal_uL14"/>
</dbReference>
<dbReference type="InterPro" id="IPR005745">
    <property type="entry name" value="Ribosomal_uL14_bac-type"/>
</dbReference>
<dbReference type="InterPro" id="IPR019972">
    <property type="entry name" value="Ribosomal_uL14_CS"/>
</dbReference>
<dbReference type="InterPro" id="IPR036853">
    <property type="entry name" value="Ribosomal_uL14_sf"/>
</dbReference>
<dbReference type="NCBIfam" id="TIGR01067">
    <property type="entry name" value="rplN_bact"/>
    <property type="match status" value="1"/>
</dbReference>
<dbReference type="PANTHER" id="PTHR11761">
    <property type="entry name" value="50S/60S RIBOSOMAL PROTEIN L14/L23"/>
    <property type="match status" value="1"/>
</dbReference>
<dbReference type="PANTHER" id="PTHR11761:SF3">
    <property type="entry name" value="LARGE RIBOSOMAL SUBUNIT PROTEIN UL14M"/>
    <property type="match status" value="1"/>
</dbReference>
<dbReference type="Pfam" id="PF00238">
    <property type="entry name" value="Ribosomal_L14"/>
    <property type="match status" value="1"/>
</dbReference>
<dbReference type="SMART" id="SM01374">
    <property type="entry name" value="Ribosomal_L14"/>
    <property type="match status" value="1"/>
</dbReference>
<dbReference type="SUPFAM" id="SSF50193">
    <property type="entry name" value="Ribosomal protein L14"/>
    <property type="match status" value="1"/>
</dbReference>
<dbReference type="PROSITE" id="PS00049">
    <property type="entry name" value="RIBOSOMAL_L14"/>
    <property type="match status" value="1"/>
</dbReference>
<keyword id="KW-0687">Ribonucleoprotein</keyword>
<keyword id="KW-0689">Ribosomal protein</keyword>
<keyword id="KW-0694">RNA-binding</keyword>
<keyword id="KW-0699">rRNA-binding</keyword>
<feature type="chain" id="PRO_0000266506" description="Large ribosomal subunit protein uL14">
    <location>
        <begin position="1"/>
        <end position="122"/>
    </location>
</feature>
<organism>
    <name type="scientific">Moorella thermoacetica (strain ATCC 39073 / JCM 9320)</name>
    <dbReference type="NCBI Taxonomy" id="264732"/>
    <lineage>
        <taxon>Bacteria</taxon>
        <taxon>Bacillati</taxon>
        <taxon>Bacillota</taxon>
        <taxon>Clostridia</taxon>
        <taxon>Moorellales</taxon>
        <taxon>Moorellaceae</taxon>
        <taxon>Moorella</taxon>
    </lineage>
</organism>
<gene>
    <name evidence="1" type="primary">rplN</name>
    <name type="ordered locus">Moth_2450</name>
</gene>
<protein>
    <recommendedName>
        <fullName evidence="1">Large ribosomal subunit protein uL14</fullName>
    </recommendedName>
    <alternativeName>
        <fullName evidence="2">50S ribosomal protein L14</fullName>
    </alternativeName>
</protein>
<comment type="function">
    <text evidence="1">Binds to 23S rRNA. Forms part of two intersubunit bridges in the 70S ribosome.</text>
</comment>
<comment type="subunit">
    <text evidence="1">Part of the 50S ribosomal subunit. Forms a cluster with proteins L3 and L19. In the 70S ribosome, L14 and L19 interact and together make contacts with the 16S rRNA in bridges B5 and B8.</text>
</comment>
<comment type="similarity">
    <text evidence="1">Belongs to the universal ribosomal protein uL14 family.</text>
</comment>
<proteinExistence type="inferred from homology"/>
<sequence>MIQQQTLLKVGDNTGARKLMCIRVLGGSKRRYASVGDVIIASVKEATPGGVVKKGDVVRAVVVRTKKAVKRPDGSYIRFNENAAVIINEQNNPRGTRIFGPVARELREKDFMKIISLAPEVL</sequence>
<name>RL14_MOOTA</name>